<organism>
    <name type="scientific">Pyrococcus horikoshii (strain ATCC 700860 / DSM 12428 / JCM 9974 / NBRC 100139 / OT-3)</name>
    <dbReference type="NCBI Taxonomy" id="70601"/>
    <lineage>
        <taxon>Archaea</taxon>
        <taxon>Methanobacteriati</taxon>
        <taxon>Methanobacteriota</taxon>
        <taxon>Thermococci</taxon>
        <taxon>Thermococcales</taxon>
        <taxon>Thermococcaceae</taxon>
        <taxon>Pyrococcus</taxon>
    </lineage>
</organism>
<feature type="chain" id="PRO_0000094177" description="CDP-archaeol synthase">
    <location>
        <begin position="1"/>
        <end position="170"/>
    </location>
</feature>
<feature type="transmembrane region" description="Helical" evidence="1">
    <location>
        <begin position="9"/>
        <end position="29"/>
    </location>
</feature>
<feature type="transmembrane region" description="Helical" evidence="1">
    <location>
        <begin position="53"/>
        <end position="73"/>
    </location>
</feature>
<feature type="transmembrane region" description="Helical" evidence="1">
    <location>
        <begin position="79"/>
        <end position="99"/>
    </location>
</feature>
<feature type="transmembrane region" description="Helical" evidence="1">
    <location>
        <begin position="114"/>
        <end position="134"/>
    </location>
</feature>
<feature type="transmembrane region" description="Helical" evidence="1">
    <location>
        <begin position="140"/>
        <end position="160"/>
    </location>
</feature>
<protein>
    <recommendedName>
        <fullName evidence="1">CDP-archaeol synthase</fullName>
        <ecNumber evidence="1">2.7.7.67</ecNumber>
    </recommendedName>
    <alternativeName>
        <fullName evidence="1">CDP-2,3-bis-(O-geranylgeranyl)-sn-glycerol synthase</fullName>
    </alternativeName>
</protein>
<comment type="function">
    <text evidence="1">Catalyzes the formation of CDP-2,3-bis-(O-geranylgeranyl)-sn-glycerol (CDP-archaeol) from 2,3-bis-(O-geranylgeranyl)-sn-glycerol 1-phosphate (DGGGP) and CTP. This reaction is the third ether-bond-formation step in the biosynthesis of archaeal membrane lipids.</text>
</comment>
<comment type="catalytic activity">
    <reaction evidence="1">
        <text>2,3-bis-O-(geranylgeranyl)-sn-glycerol 1-phosphate + CTP + H(+) = CDP-2,3-bis-O-(geranylgeranyl)-sn-glycerol + diphosphate</text>
        <dbReference type="Rhea" id="RHEA:25690"/>
        <dbReference type="ChEBI" id="CHEBI:15378"/>
        <dbReference type="ChEBI" id="CHEBI:33019"/>
        <dbReference type="ChEBI" id="CHEBI:37563"/>
        <dbReference type="ChEBI" id="CHEBI:58837"/>
        <dbReference type="ChEBI" id="CHEBI:58838"/>
        <dbReference type="EC" id="2.7.7.67"/>
    </reaction>
</comment>
<comment type="cofactor">
    <cofactor evidence="1">
        <name>Mg(2+)</name>
        <dbReference type="ChEBI" id="CHEBI:18420"/>
    </cofactor>
</comment>
<comment type="pathway">
    <text evidence="1">Membrane lipid metabolism; glycerophospholipid metabolism.</text>
</comment>
<comment type="subcellular location">
    <subcellularLocation>
        <location evidence="1">Cell membrane</location>
        <topology evidence="1">Multi-pass membrane protein</topology>
    </subcellularLocation>
</comment>
<comment type="similarity">
    <text evidence="1">Belongs to the CDP-archaeol synthase family.</text>
</comment>
<accession>O58081</accession>
<name>CDPAS_PYRHO</name>
<gene>
    <name evidence="1" type="primary">carS</name>
    <name type="ordered locus">PH0343</name>
</gene>
<keyword id="KW-1003">Cell membrane</keyword>
<keyword id="KW-0444">Lipid biosynthesis</keyword>
<keyword id="KW-0443">Lipid metabolism</keyword>
<keyword id="KW-0460">Magnesium</keyword>
<keyword id="KW-0472">Membrane</keyword>
<keyword id="KW-0594">Phospholipid biosynthesis</keyword>
<keyword id="KW-1208">Phospholipid metabolism</keyword>
<keyword id="KW-0808">Transferase</keyword>
<keyword id="KW-0812">Transmembrane</keyword>
<keyword id="KW-1133">Transmembrane helix</keyword>
<dbReference type="EC" id="2.7.7.67" evidence="1"/>
<dbReference type="EMBL" id="BA000001">
    <property type="protein sequence ID" value="BAA29417.1"/>
    <property type="molecule type" value="Genomic_DNA"/>
</dbReference>
<dbReference type="PIR" id="D71141">
    <property type="entry name" value="D71141"/>
</dbReference>
<dbReference type="SMR" id="O58081"/>
<dbReference type="STRING" id="70601.gene:9377262"/>
<dbReference type="EnsemblBacteria" id="BAA29417">
    <property type="protein sequence ID" value="BAA29417"/>
    <property type="gene ID" value="BAA29417"/>
</dbReference>
<dbReference type="KEGG" id="pho:PH0343"/>
<dbReference type="eggNOG" id="arCOG04106">
    <property type="taxonomic scope" value="Archaea"/>
</dbReference>
<dbReference type="UniPathway" id="UPA00940"/>
<dbReference type="Proteomes" id="UP000000752">
    <property type="component" value="Chromosome"/>
</dbReference>
<dbReference type="GO" id="GO:0005886">
    <property type="term" value="C:plasma membrane"/>
    <property type="evidence" value="ECO:0007669"/>
    <property type="project" value="UniProtKB-SubCell"/>
</dbReference>
<dbReference type="GO" id="GO:0043338">
    <property type="term" value="F:CDP-2,3-bis-(O-geranylgeranyl)-sn-glycerol synthase activity"/>
    <property type="evidence" value="ECO:0007669"/>
    <property type="project" value="UniProtKB-EC"/>
</dbReference>
<dbReference type="GO" id="GO:0046474">
    <property type="term" value="P:glycerophospholipid biosynthetic process"/>
    <property type="evidence" value="ECO:0007669"/>
    <property type="project" value="UniProtKB-UniRule"/>
</dbReference>
<dbReference type="HAMAP" id="MF_01117">
    <property type="entry name" value="CDP_archaeol_synth"/>
    <property type="match status" value="1"/>
</dbReference>
<dbReference type="InterPro" id="IPR032690">
    <property type="entry name" value="CarS"/>
</dbReference>
<dbReference type="InterPro" id="IPR002726">
    <property type="entry name" value="CarS_archaea"/>
</dbReference>
<dbReference type="NCBIfam" id="NF003114">
    <property type="entry name" value="PRK04032.1"/>
    <property type="match status" value="1"/>
</dbReference>
<dbReference type="PANTHER" id="PTHR39650">
    <property type="entry name" value="CDP-ARCHAEOL SYNTHASE"/>
    <property type="match status" value="1"/>
</dbReference>
<dbReference type="PANTHER" id="PTHR39650:SF1">
    <property type="entry name" value="CDP-ARCHAEOL SYNTHASE"/>
    <property type="match status" value="1"/>
</dbReference>
<dbReference type="Pfam" id="PF01864">
    <property type="entry name" value="CarS-like"/>
    <property type="match status" value="1"/>
</dbReference>
<evidence type="ECO:0000255" key="1">
    <source>
        <dbReference type="HAMAP-Rule" id="MF_01117"/>
    </source>
</evidence>
<reference key="1">
    <citation type="journal article" date="1998" name="DNA Res.">
        <title>Complete sequence and gene organization of the genome of a hyper-thermophilic archaebacterium, Pyrococcus horikoshii OT3.</title>
        <authorList>
            <person name="Kawarabayasi Y."/>
            <person name="Sawada M."/>
            <person name="Horikawa H."/>
            <person name="Haikawa Y."/>
            <person name="Hino Y."/>
            <person name="Yamamoto S."/>
            <person name="Sekine M."/>
            <person name="Baba S."/>
            <person name="Kosugi H."/>
            <person name="Hosoyama A."/>
            <person name="Nagai Y."/>
            <person name="Sakai M."/>
            <person name="Ogura K."/>
            <person name="Otsuka R."/>
            <person name="Nakazawa H."/>
            <person name="Takamiya M."/>
            <person name="Ohfuku Y."/>
            <person name="Funahashi T."/>
            <person name="Tanaka T."/>
            <person name="Kudoh Y."/>
            <person name="Yamazaki J."/>
            <person name="Kushida N."/>
            <person name="Oguchi A."/>
            <person name="Aoki K."/>
            <person name="Yoshizawa T."/>
            <person name="Nakamura Y."/>
            <person name="Robb F.T."/>
            <person name="Horikoshi K."/>
            <person name="Masuchi Y."/>
            <person name="Shizuya H."/>
            <person name="Kikuchi H."/>
        </authorList>
    </citation>
    <scope>NUCLEOTIDE SEQUENCE [LARGE SCALE GENOMIC DNA]</scope>
    <source>
        <strain>ATCC 700860 / DSM 12428 / JCM 9974 / NBRC 100139 / OT-3</strain>
    </source>
</reference>
<proteinExistence type="inferred from homology"/>
<sequence length="170" mass="18951">MKMNQLLEAFWYILPAYFANSSPVVLGGGTPIDFGKKWRDGRRILGDGKTWRGFFGGLIVGTIIGIVQYFLLPEYYGSLGIAIELAFLLSLGTLVGDLIGSFIKRRLNMPRGYPAVGLDQWGFLIAALCFAYPVKTIPTGEVLFLLVITPLIHWGANIFAYKMGWKKVPW</sequence>